<sequence>MADENQTNNGEAAGAQAQQGAQFNIQRIYTKDISFESPNAPAIFTKEWKPEIKLDIDTSTNKLEENVFEVVLSVTVTATLGEETAFLCEVQQAGIFAIGEMPDQNKAHTLGSFCPNMLFPYARETISNLVNRGTFPPLNLAPVNFDAIFAAYVQKRAQQAQGEAPKMDA</sequence>
<organism>
    <name type="scientific">Alteromonas mediterranea (strain DSM 17117 / CIP 110805 / LMG 28347 / Deep ecotype)</name>
    <dbReference type="NCBI Taxonomy" id="1774373"/>
    <lineage>
        <taxon>Bacteria</taxon>
        <taxon>Pseudomonadati</taxon>
        <taxon>Pseudomonadota</taxon>
        <taxon>Gammaproteobacteria</taxon>
        <taxon>Alteromonadales</taxon>
        <taxon>Alteromonadaceae</taxon>
        <taxon>Alteromonas/Salinimonas group</taxon>
        <taxon>Alteromonas</taxon>
    </lineage>
</organism>
<evidence type="ECO:0000255" key="1">
    <source>
        <dbReference type="HAMAP-Rule" id="MF_00821"/>
    </source>
</evidence>
<comment type="function">
    <text evidence="1">One of the proteins required for the normal export of preproteins out of the cell cytoplasm. It is a molecular chaperone that binds to a subset of precursor proteins, maintaining them in a translocation-competent state. It also specifically binds to its receptor SecA.</text>
</comment>
<comment type="subunit">
    <text evidence="1">Homotetramer, a dimer of dimers. One homotetramer interacts with 1 SecA dimer.</text>
</comment>
<comment type="subcellular location">
    <subcellularLocation>
        <location evidence="1">Cytoplasm</location>
    </subcellularLocation>
</comment>
<comment type="similarity">
    <text evidence="1">Belongs to the SecB family.</text>
</comment>
<proteinExistence type="inferred from homology"/>
<keyword id="KW-0143">Chaperone</keyword>
<keyword id="KW-0963">Cytoplasm</keyword>
<keyword id="KW-0653">Protein transport</keyword>
<keyword id="KW-0811">Translocation</keyword>
<keyword id="KW-0813">Transport</keyword>
<feature type="chain" id="PRO_1000134361" description="Protein-export protein SecB">
    <location>
        <begin position="1"/>
        <end position="169"/>
    </location>
</feature>
<reference key="1">
    <citation type="journal article" date="2008" name="ISME J.">
        <title>Comparative genomics of two ecotypes of the marine planktonic copiotroph Alteromonas macleodii suggests alternative lifestyles associated with different kinds of particulate organic matter.</title>
        <authorList>
            <person name="Ivars-Martinez E."/>
            <person name="Martin-Cuadrado A.-B."/>
            <person name="D'Auria G."/>
            <person name="Mira A."/>
            <person name="Ferriera S."/>
            <person name="Johnson J."/>
            <person name="Friedman R."/>
            <person name="Rodriguez-Valera F."/>
        </authorList>
    </citation>
    <scope>NUCLEOTIDE SEQUENCE [LARGE SCALE GENOMIC DNA]</scope>
    <source>
        <strain>DSM 17117 / CIP 110805 / LMG 28347 / Deep ecotype</strain>
    </source>
</reference>
<dbReference type="EMBL" id="CP001103">
    <property type="protein sequence ID" value="AEA96691.1"/>
    <property type="molecule type" value="Genomic_DNA"/>
</dbReference>
<dbReference type="RefSeq" id="WP_012517046.1">
    <property type="nucleotide sequence ID" value="NC_011138.3"/>
</dbReference>
<dbReference type="SMR" id="B4S0I7"/>
<dbReference type="GeneID" id="56341031"/>
<dbReference type="KEGG" id="amc:MADE_1002710"/>
<dbReference type="HOGENOM" id="CLU_111574_1_0_6"/>
<dbReference type="Proteomes" id="UP000001870">
    <property type="component" value="Chromosome"/>
</dbReference>
<dbReference type="GO" id="GO:0005737">
    <property type="term" value="C:cytoplasm"/>
    <property type="evidence" value="ECO:0007669"/>
    <property type="project" value="UniProtKB-SubCell"/>
</dbReference>
<dbReference type="GO" id="GO:0051082">
    <property type="term" value="F:unfolded protein binding"/>
    <property type="evidence" value="ECO:0007669"/>
    <property type="project" value="InterPro"/>
</dbReference>
<dbReference type="GO" id="GO:0006457">
    <property type="term" value="P:protein folding"/>
    <property type="evidence" value="ECO:0007669"/>
    <property type="project" value="UniProtKB-UniRule"/>
</dbReference>
<dbReference type="GO" id="GO:0051262">
    <property type="term" value="P:protein tetramerization"/>
    <property type="evidence" value="ECO:0007669"/>
    <property type="project" value="InterPro"/>
</dbReference>
<dbReference type="GO" id="GO:0015031">
    <property type="term" value="P:protein transport"/>
    <property type="evidence" value="ECO:0007669"/>
    <property type="project" value="UniProtKB-UniRule"/>
</dbReference>
<dbReference type="Gene3D" id="3.10.420.10">
    <property type="entry name" value="SecB-like"/>
    <property type="match status" value="1"/>
</dbReference>
<dbReference type="HAMAP" id="MF_00821">
    <property type="entry name" value="SecB"/>
    <property type="match status" value="1"/>
</dbReference>
<dbReference type="InterPro" id="IPR003708">
    <property type="entry name" value="SecB"/>
</dbReference>
<dbReference type="InterPro" id="IPR035958">
    <property type="entry name" value="SecB-like_sf"/>
</dbReference>
<dbReference type="NCBIfam" id="NF004393">
    <property type="entry name" value="PRK05751.1-4"/>
    <property type="match status" value="1"/>
</dbReference>
<dbReference type="NCBIfam" id="TIGR00809">
    <property type="entry name" value="secB"/>
    <property type="match status" value="1"/>
</dbReference>
<dbReference type="PANTHER" id="PTHR36918">
    <property type="match status" value="1"/>
</dbReference>
<dbReference type="PANTHER" id="PTHR36918:SF1">
    <property type="entry name" value="PROTEIN-EXPORT PROTEIN SECB"/>
    <property type="match status" value="1"/>
</dbReference>
<dbReference type="Pfam" id="PF02556">
    <property type="entry name" value="SecB"/>
    <property type="match status" value="1"/>
</dbReference>
<dbReference type="PRINTS" id="PR01594">
    <property type="entry name" value="SECBCHAPRONE"/>
</dbReference>
<dbReference type="SUPFAM" id="SSF54611">
    <property type="entry name" value="SecB-like"/>
    <property type="match status" value="1"/>
</dbReference>
<protein>
    <recommendedName>
        <fullName evidence="1">Protein-export protein SecB</fullName>
    </recommendedName>
</protein>
<gene>
    <name evidence="1" type="primary">secB</name>
    <name type="ordered locus">MADE_1002710</name>
</gene>
<name>SECB_ALTMD</name>
<accession>B4S0I7</accession>
<accession>F2G7B1</accession>